<protein>
    <recommendedName>
        <fullName>Cytochrome c homolog</fullName>
    </recommendedName>
</protein>
<dbReference type="EMBL" id="AE006914">
    <property type="protein sequence ID" value="AAL02875.1"/>
    <property type="molecule type" value="Genomic_DNA"/>
</dbReference>
<dbReference type="PIR" id="A97742">
    <property type="entry name" value="A97742"/>
</dbReference>
<dbReference type="RefSeq" id="WP_010976992.1">
    <property type="nucleotide sequence ID" value="NC_003103.1"/>
</dbReference>
<dbReference type="SMR" id="Q92IT3"/>
<dbReference type="GeneID" id="927511"/>
<dbReference type="KEGG" id="rco:RC0337"/>
<dbReference type="PATRIC" id="fig|272944.4.peg.386"/>
<dbReference type="HOGENOM" id="CLU_060944_4_0_5"/>
<dbReference type="Proteomes" id="UP000000816">
    <property type="component" value="Chromosome"/>
</dbReference>
<dbReference type="GO" id="GO:0005886">
    <property type="term" value="C:plasma membrane"/>
    <property type="evidence" value="ECO:0007669"/>
    <property type="project" value="UniProtKB-SubCell"/>
</dbReference>
<dbReference type="GO" id="GO:0009055">
    <property type="term" value="F:electron transfer activity"/>
    <property type="evidence" value="ECO:0007669"/>
    <property type="project" value="InterPro"/>
</dbReference>
<dbReference type="GO" id="GO:0020037">
    <property type="term" value="F:heme binding"/>
    <property type="evidence" value="ECO:0007669"/>
    <property type="project" value="InterPro"/>
</dbReference>
<dbReference type="GO" id="GO:0046872">
    <property type="term" value="F:metal ion binding"/>
    <property type="evidence" value="ECO:0007669"/>
    <property type="project" value="UniProtKB-KW"/>
</dbReference>
<dbReference type="FunFam" id="1.10.760.10:FF:000026">
    <property type="entry name" value="Cytochrome C, membrane-bound"/>
    <property type="match status" value="1"/>
</dbReference>
<dbReference type="Gene3D" id="1.10.760.10">
    <property type="entry name" value="Cytochrome c-like domain"/>
    <property type="match status" value="1"/>
</dbReference>
<dbReference type="InterPro" id="IPR009056">
    <property type="entry name" value="Cyt_c-like_dom"/>
</dbReference>
<dbReference type="InterPro" id="IPR036909">
    <property type="entry name" value="Cyt_c-like_dom_sf"/>
</dbReference>
<dbReference type="InterPro" id="IPR002327">
    <property type="entry name" value="Cyt_c_1A/1B"/>
</dbReference>
<dbReference type="PANTHER" id="PTHR11961">
    <property type="entry name" value="CYTOCHROME C"/>
    <property type="match status" value="1"/>
</dbReference>
<dbReference type="Pfam" id="PF00034">
    <property type="entry name" value="Cytochrom_C"/>
    <property type="match status" value="1"/>
</dbReference>
<dbReference type="PRINTS" id="PR00604">
    <property type="entry name" value="CYTCHRMECIAB"/>
</dbReference>
<dbReference type="SUPFAM" id="SSF46626">
    <property type="entry name" value="Cytochrome c"/>
    <property type="match status" value="1"/>
</dbReference>
<dbReference type="PROSITE" id="PS51007">
    <property type="entry name" value="CYTC"/>
    <property type="match status" value="1"/>
</dbReference>
<name>CYCM_RICCN</name>
<comment type="function">
    <text evidence="1">May be involved in electron transfer from bc1 complex to aa3.</text>
</comment>
<comment type="subcellular location">
    <subcellularLocation>
        <location evidence="1">Cell membrane</location>
        <topology evidence="1">Single-pass type II membrane protein</topology>
    </subcellularLocation>
</comment>
<comment type="PTM">
    <text evidence="1">Binds 1 heme c group covalently per subunit.</text>
</comment>
<comment type="similarity">
    <text evidence="4">Belongs to the cytochrome c family.</text>
</comment>
<accession>Q92IT3</accession>
<sequence length="175" mass="19139">MSGKELNKIVAAILFASLIAMMVGFVANILYKPTLELQHRGYSVAVQESSENQNTTALEQAPVNIPELMKTANADNGREIAKKCLMCHSLDKDGPNKLGPHLWDVTGRPKASIADYKYSPALSKLGGVWDDDSLFAFLHKPSSYAPGTKMSFAGISKPQDIADVILFLKTYVHDK</sequence>
<reference key="1">
    <citation type="journal article" date="2001" name="Science">
        <title>Mechanisms of evolution in Rickettsia conorii and R. prowazekii.</title>
        <authorList>
            <person name="Ogata H."/>
            <person name="Audic S."/>
            <person name="Renesto-Audiffren P."/>
            <person name="Fournier P.-E."/>
            <person name="Barbe V."/>
            <person name="Samson D."/>
            <person name="Roux V."/>
            <person name="Cossart P."/>
            <person name="Weissenbach J."/>
            <person name="Claverie J.-M."/>
            <person name="Raoult D."/>
        </authorList>
    </citation>
    <scope>NUCLEOTIDE SEQUENCE [LARGE SCALE GENOMIC DNA]</scope>
    <source>
        <strain>ATCC VR-613 / Malish 7</strain>
    </source>
</reference>
<organism>
    <name type="scientific">Rickettsia conorii (strain ATCC VR-613 / Malish 7)</name>
    <dbReference type="NCBI Taxonomy" id="272944"/>
    <lineage>
        <taxon>Bacteria</taxon>
        <taxon>Pseudomonadati</taxon>
        <taxon>Pseudomonadota</taxon>
        <taxon>Alphaproteobacteria</taxon>
        <taxon>Rickettsiales</taxon>
        <taxon>Rickettsiaceae</taxon>
        <taxon>Rickettsieae</taxon>
        <taxon>Rickettsia</taxon>
        <taxon>spotted fever group</taxon>
    </lineage>
</organism>
<feature type="chain" id="PRO_0000288756" description="Cytochrome c homolog">
    <location>
        <begin position="1"/>
        <end position="175"/>
    </location>
</feature>
<feature type="topological domain" description="Cytoplasmic" evidence="2">
    <location>
        <begin position="1"/>
        <end position="8"/>
    </location>
</feature>
<feature type="transmembrane region" description="Helical; Signal-anchor" evidence="2">
    <location>
        <begin position="9"/>
        <end position="29"/>
    </location>
</feature>
<feature type="topological domain" description="Periplasmic" evidence="2">
    <location>
        <begin position="30"/>
        <end position="175"/>
    </location>
</feature>
<feature type="binding site" description="covalent" evidence="3">
    <location>
        <position position="84"/>
    </location>
    <ligand>
        <name>heme c</name>
        <dbReference type="ChEBI" id="CHEBI:61717"/>
    </ligand>
</feature>
<feature type="binding site" description="covalent" evidence="3">
    <location>
        <position position="87"/>
    </location>
    <ligand>
        <name>heme c</name>
        <dbReference type="ChEBI" id="CHEBI:61717"/>
    </ligand>
</feature>
<feature type="binding site" description="axial binding residue" evidence="3">
    <location>
        <position position="88"/>
    </location>
    <ligand>
        <name>heme c</name>
        <dbReference type="ChEBI" id="CHEBI:61717"/>
    </ligand>
    <ligandPart>
        <name>Fe</name>
        <dbReference type="ChEBI" id="CHEBI:18248"/>
    </ligandPart>
</feature>
<feature type="binding site" description="axial binding residue" evidence="3">
    <location>
        <position position="150"/>
    </location>
    <ligand>
        <name>heme c</name>
        <dbReference type="ChEBI" id="CHEBI:61717"/>
    </ligand>
    <ligandPart>
        <name>Fe</name>
        <dbReference type="ChEBI" id="CHEBI:18248"/>
    </ligandPart>
</feature>
<proteinExistence type="inferred from homology"/>
<evidence type="ECO:0000250" key="1"/>
<evidence type="ECO:0000255" key="2"/>
<evidence type="ECO:0000255" key="3">
    <source>
        <dbReference type="PROSITE-ProRule" id="PRU00433"/>
    </source>
</evidence>
<evidence type="ECO:0000305" key="4"/>
<gene>
    <name type="primary">cycM</name>
    <name type="ordered locus">RC0337</name>
</gene>
<keyword id="KW-1003">Cell membrane</keyword>
<keyword id="KW-0249">Electron transport</keyword>
<keyword id="KW-0349">Heme</keyword>
<keyword id="KW-0408">Iron</keyword>
<keyword id="KW-0472">Membrane</keyword>
<keyword id="KW-0479">Metal-binding</keyword>
<keyword id="KW-0735">Signal-anchor</keyword>
<keyword id="KW-0812">Transmembrane</keyword>
<keyword id="KW-1133">Transmembrane helix</keyword>
<keyword id="KW-0813">Transport</keyword>